<feature type="chain" id="PRO_1000146684" description="Formate--tetrahydrofolate ligase">
    <location>
        <begin position="1"/>
        <end position="556"/>
    </location>
</feature>
<feature type="binding site" evidence="1">
    <location>
        <begin position="65"/>
        <end position="72"/>
    </location>
    <ligand>
        <name>ATP</name>
        <dbReference type="ChEBI" id="CHEBI:30616"/>
    </ligand>
</feature>
<gene>
    <name evidence="1" type="primary">fhs</name>
    <name type="ordered locus">Helmi_12550</name>
    <name type="ORF">HM1_0672</name>
</gene>
<organism>
    <name type="scientific">Heliobacterium modesticaldum (strain ATCC 51547 / Ice1)</name>
    <dbReference type="NCBI Taxonomy" id="498761"/>
    <lineage>
        <taxon>Bacteria</taxon>
        <taxon>Bacillati</taxon>
        <taxon>Bacillota</taxon>
        <taxon>Clostridia</taxon>
        <taxon>Eubacteriales</taxon>
        <taxon>Heliobacteriaceae</taxon>
        <taxon>Heliomicrobium</taxon>
    </lineage>
</organism>
<dbReference type="EC" id="6.3.4.3" evidence="1"/>
<dbReference type="EMBL" id="CP000930">
    <property type="protein sequence ID" value="ABZ83880.1"/>
    <property type="molecule type" value="Genomic_DNA"/>
</dbReference>
<dbReference type="RefSeq" id="WP_012282398.1">
    <property type="nucleotide sequence ID" value="NC_010337.2"/>
</dbReference>
<dbReference type="SMR" id="B0TBP1"/>
<dbReference type="STRING" id="498761.HM1_0672"/>
<dbReference type="KEGG" id="hmo:HM1_0672"/>
<dbReference type="eggNOG" id="COG2759">
    <property type="taxonomic scope" value="Bacteria"/>
</dbReference>
<dbReference type="HOGENOM" id="CLU_003601_3_3_9"/>
<dbReference type="OrthoDB" id="9761733at2"/>
<dbReference type="UniPathway" id="UPA00193"/>
<dbReference type="Proteomes" id="UP000008550">
    <property type="component" value="Chromosome"/>
</dbReference>
<dbReference type="GO" id="GO:0005524">
    <property type="term" value="F:ATP binding"/>
    <property type="evidence" value="ECO:0007669"/>
    <property type="project" value="UniProtKB-UniRule"/>
</dbReference>
<dbReference type="GO" id="GO:0004329">
    <property type="term" value="F:formate-tetrahydrofolate ligase activity"/>
    <property type="evidence" value="ECO:0007669"/>
    <property type="project" value="UniProtKB-UniRule"/>
</dbReference>
<dbReference type="GO" id="GO:0035999">
    <property type="term" value="P:tetrahydrofolate interconversion"/>
    <property type="evidence" value="ECO:0007669"/>
    <property type="project" value="UniProtKB-UniRule"/>
</dbReference>
<dbReference type="CDD" id="cd00477">
    <property type="entry name" value="FTHFS"/>
    <property type="match status" value="1"/>
</dbReference>
<dbReference type="FunFam" id="3.30.1510.10:FF:000001">
    <property type="entry name" value="Formate--tetrahydrofolate ligase"/>
    <property type="match status" value="1"/>
</dbReference>
<dbReference type="FunFam" id="3.10.410.10:FF:000001">
    <property type="entry name" value="Putative formate--tetrahydrofolate ligase"/>
    <property type="match status" value="1"/>
</dbReference>
<dbReference type="Gene3D" id="3.30.1510.10">
    <property type="entry name" value="Domain 2, N(10)-formyltetrahydrofolate synthetase"/>
    <property type="match status" value="1"/>
</dbReference>
<dbReference type="Gene3D" id="3.10.410.10">
    <property type="entry name" value="Formyltetrahydrofolate synthetase, domain 3"/>
    <property type="match status" value="1"/>
</dbReference>
<dbReference type="Gene3D" id="3.40.50.300">
    <property type="entry name" value="P-loop containing nucleotide triphosphate hydrolases"/>
    <property type="match status" value="1"/>
</dbReference>
<dbReference type="HAMAP" id="MF_01543">
    <property type="entry name" value="FTHFS"/>
    <property type="match status" value="1"/>
</dbReference>
<dbReference type="InterPro" id="IPR000559">
    <property type="entry name" value="Formate_THF_ligase"/>
</dbReference>
<dbReference type="InterPro" id="IPR020628">
    <property type="entry name" value="Formate_THF_ligase_CS"/>
</dbReference>
<dbReference type="InterPro" id="IPR027417">
    <property type="entry name" value="P-loop_NTPase"/>
</dbReference>
<dbReference type="NCBIfam" id="NF010030">
    <property type="entry name" value="PRK13505.1"/>
    <property type="match status" value="1"/>
</dbReference>
<dbReference type="Pfam" id="PF01268">
    <property type="entry name" value="FTHFS"/>
    <property type="match status" value="1"/>
</dbReference>
<dbReference type="SUPFAM" id="SSF52540">
    <property type="entry name" value="P-loop containing nucleoside triphosphate hydrolases"/>
    <property type="match status" value="1"/>
</dbReference>
<dbReference type="PROSITE" id="PS00721">
    <property type="entry name" value="FTHFS_1"/>
    <property type="match status" value="1"/>
</dbReference>
<dbReference type="PROSITE" id="PS00722">
    <property type="entry name" value="FTHFS_2"/>
    <property type="match status" value="1"/>
</dbReference>
<evidence type="ECO:0000255" key="1">
    <source>
        <dbReference type="HAMAP-Rule" id="MF_01543"/>
    </source>
</evidence>
<reference key="1">
    <citation type="journal article" date="2008" name="J. Bacteriol.">
        <title>The genome of Heliobacterium modesticaldum, a phototrophic representative of the Firmicutes containing the simplest photosynthetic apparatus.</title>
        <authorList>
            <person name="Sattley W.M."/>
            <person name="Madigan M.T."/>
            <person name="Swingley W.D."/>
            <person name="Cheung P.C."/>
            <person name="Clocksin K.M."/>
            <person name="Conrad A.L."/>
            <person name="Dejesa L.C."/>
            <person name="Honchak B.M."/>
            <person name="Jung D.O."/>
            <person name="Karbach L.E."/>
            <person name="Kurdoglu A."/>
            <person name="Lahiri S."/>
            <person name="Mastrian S.D."/>
            <person name="Page L.E."/>
            <person name="Taylor H.L."/>
            <person name="Wang Z.T."/>
            <person name="Raymond J."/>
            <person name="Chen M."/>
            <person name="Blankenship R.E."/>
            <person name="Touchman J.W."/>
        </authorList>
    </citation>
    <scope>NUCLEOTIDE SEQUENCE [LARGE SCALE GENOMIC DNA]</scope>
    <source>
        <strain>ATCC 51547 / Ice1</strain>
    </source>
</reference>
<protein>
    <recommendedName>
        <fullName evidence="1">Formate--tetrahydrofolate ligase</fullName>
        <ecNumber evidence="1">6.3.4.3</ecNumber>
    </recommendedName>
    <alternativeName>
        <fullName evidence="1">Formyltetrahydrofolate synthetase</fullName>
        <shortName evidence="1">FHS</shortName>
        <shortName evidence="1">FTHFS</shortName>
    </alternativeName>
</protein>
<sequence length="556" mass="59530">MKTDIEIAQEATLQPIMDVARSLGIPENEVELYGNYKAKISLKAFERLKERREGKLILVTAINPTPAGEGKTTTTVGLGDALRRLGKKVVIALREPSLGPSFGVKGGAAGGGYAQIVPMEDINLHFTGDFHAVTSAHNLLAAMLDNSLQQGNPLNIDPRQVVFRRVLDLNDRALRKVIVGLGGRTDGIPRESGFDITVASEIMAILCLSKDLMDLKARCAKIVVAYTYDGKPVTAADLEAQGSMAVLLKDAIKPNLVQTLEHTPAFVHGGPFANIAHGCNSVTATQLALKLGDYCVTEAGFGADLGAEKFFNLKCRLAGLKPDCTVIVATVRALKSHGGVAKADLNRENLEALAKGFGNLEKHIENVAKFGVPAVVAINAFPTDTKAELDYVYERCRQMGIDVALSEVWAKGGEGGRELAEKVVAAIETKPSRFRVLYDSSLPIKEKIAAIVREVYGGDAVAYTPEAEKHIKTFTDLGYGALPVCMAKTQYSLSDDMTKIGRPEGFTVTVREVRLSAGAGFLVVITGAIMTMPGLPKRPAACAIDIDENGRIVGLF</sequence>
<name>FTHS_HELMI</name>
<comment type="catalytic activity">
    <reaction evidence="1">
        <text>(6S)-5,6,7,8-tetrahydrofolate + formate + ATP = (6R)-10-formyltetrahydrofolate + ADP + phosphate</text>
        <dbReference type="Rhea" id="RHEA:20221"/>
        <dbReference type="ChEBI" id="CHEBI:15740"/>
        <dbReference type="ChEBI" id="CHEBI:30616"/>
        <dbReference type="ChEBI" id="CHEBI:43474"/>
        <dbReference type="ChEBI" id="CHEBI:57453"/>
        <dbReference type="ChEBI" id="CHEBI:195366"/>
        <dbReference type="ChEBI" id="CHEBI:456216"/>
        <dbReference type="EC" id="6.3.4.3"/>
    </reaction>
</comment>
<comment type="pathway">
    <text evidence="1">One-carbon metabolism; tetrahydrofolate interconversion.</text>
</comment>
<comment type="similarity">
    <text evidence="1">Belongs to the formate--tetrahydrofolate ligase family.</text>
</comment>
<proteinExistence type="inferred from homology"/>
<keyword id="KW-0067">ATP-binding</keyword>
<keyword id="KW-0436">Ligase</keyword>
<keyword id="KW-0547">Nucleotide-binding</keyword>
<keyword id="KW-0554">One-carbon metabolism</keyword>
<keyword id="KW-1185">Reference proteome</keyword>
<accession>B0TBP1</accession>